<dbReference type="EC" id="3.6.1.7"/>
<dbReference type="EMBL" id="AE008923">
    <property type="protein sequence ID" value="AAM35827.1"/>
    <property type="molecule type" value="Genomic_DNA"/>
</dbReference>
<dbReference type="SMR" id="Q8PNV0"/>
<dbReference type="KEGG" id="xac:XAC0939"/>
<dbReference type="eggNOG" id="COG1254">
    <property type="taxonomic scope" value="Bacteria"/>
</dbReference>
<dbReference type="HOGENOM" id="CLU_141932_1_3_6"/>
<dbReference type="Proteomes" id="UP000000576">
    <property type="component" value="Chromosome"/>
</dbReference>
<dbReference type="GO" id="GO:0003998">
    <property type="term" value="F:acylphosphatase activity"/>
    <property type="evidence" value="ECO:0007669"/>
    <property type="project" value="UniProtKB-EC"/>
</dbReference>
<dbReference type="Gene3D" id="3.30.70.100">
    <property type="match status" value="1"/>
</dbReference>
<dbReference type="InterPro" id="IPR020456">
    <property type="entry name" value="Acylphosphatase"/>
</dbReference>
<dbReference type="InterPro" id="IPR001792">
    <property type="entry name" value="Acylphosphatase-like_dom"/>
</dbReference>
<dbReference type="InterPro" id="IPR036046">
    <property type="entry name" value="Acylphosphatase-like_dom_sf"/>
</dbReference>
<dbReference type="NCBIfam" id="NF011018">
    <property type="entry name" value="PRK14446.1"/>
    <property type="match status" value="1"/>
</dbReference>
<dbReference type="PANTHER" id="PTHR47268">
    <property type="entry name" value="ACYLPHOSPHATASE"/>
    <property type="match status" value="1"/>
</dbReference>
<dbReference type="PANTHER" id="PTHR47268:SF4">
    <property type="entry name" value="ACYLPHOSPHATASE"/>
    <property type="match status" value="1"/>
</dbReference>
<dbReference type="Pfam" id="PF00708">
    <property type="entry name" value="Acylphosphatase"/>
    <property type="match status" value="1"/>
</dbReference>
<dbReference type="SUPFAM" id="SSF54975">
    <property type="entry name" value="Acylphosphatase/BLUF domain-like"/>
    <property type="match status" value="1"/>
</dbReference>
<dbReference type="PROSITE" id="PS51160">
    <property type="entry name" value="ACYLPHOSPHATASE_3"/>
    <property type="match status" value="1"/>
</dbReference>
<gene>
    <name type="primary">acyP</name>
    <name type="ordered locus">XAC0939</name>
</gene>
<feature type="chain" id="PRO_0000326845" description="Acylphosphatase">
    <location>
        <begin position="1"/>
        <end position="85"/>
    </location>
</feature>
<feature type="domain" description="Acylphosphatase-like" evidence="1">
    <location>
        <begin position="3"/>
        <end position="85"/>
    </location>
</feature>
<feature type="region of interest" description="Disordered" evidence="2">
    <location>
        <begin position="66"/>
        <end position="85"/>
    </location>
</feature>
<feature type="active site" evidence="1">
    <location>
        <position position="18"/>
    </location>
</feature>
<feature type="active site" evidence="1">
    <location>
        <position position="36"/>
    </location>
</feature>
<reference key="1">
    <citation type="journal article" date="2002" name="Nature">
        <title>Comparison of the genomes of two Xanthomonas pathogens with differing host specificities.</title>
        <authorList>
            <person name="da Silva A.C.R."/>
            <person name="Ferro J.A."/>
            <person name="Reinach F.C."/>
            <person name="Farah C.S."/>
            <person name="Furlan L.R."/>
            <person name="Quaggio R.B."/>
            <person name="Monteiro-Vitorello C.B."/>
            <person name="Van Sluys M.A."/>
            <person name="Almeida N.F. Jr."/>
            <person name="Alves L.M.C."/>
            <person name="do Amaral A.M."/>
            <person name="Bertolini M.C."/>
            <person name="Camargo L.E.A."/>
            <person name="Camarotte G."/>
            <person name="Cannavan F."/>
            <person name="Cardozo J."/>
            <person name="Chambergo F."/>
            <person name="Ciapina L.P."/>
            <person name="Cicarelli R.M.B."/>
            <person name="Coutinho L.L."/>
            <person name="Cursino-Santos J.R."/>
            <person name="El-Dorry H."/>
            <person name="Faria J.B."/>
            <person name="Ferreira A.J.S."/>
            <person name="Ferreira R.C.C."/>
            <person name="Ferro M.I.T."/>
            <person name="Formighieri E.F."/>
            <person name="Franco M.C."/>
            <person name="Greggio C.C."/>
            <person name="Gruber A."/>
            <person name="Katsuyama A.M."/>
            <person name="Kishi L.T."/>
            <person name="Leite R.P."/>
            <person name="Lemos E.G.M."/>
            <person name="Lemos M.V.F."/>
            <person name="Locali E.C."/>
            <person name="Machado M.A."/>
            <person name="Madeira A.M.B.N."/>
            <person name="Martinez-Rossi N.M."/>
            <person name="Martins E.C."/>
            <person name="Meidanis J."/>
            <person name="Menck C.F.M."/>
            <person name="Miyaki C.Y."/>
            <person name="Moon D.H."/>
            <person name="Moreira L.M."/>
            <person name="Novo M.T.M."/>
            <person name="Okura V.K."/>
            <person name="Oliveira M.C."/>
            <person name="Oliveira V.R."/>
            <person name="Pereira H.A."/>
            <person name="Rossi A."/>
            <person name="Sena J.A.D."/>
            <person name="Silva C."/>
            <person name="de Souza R.F."/>
            <person name="Spinola L.A.F."/>
            <person name="Takita M.A."/>
            <person name="Tamura R.E."/>
            <person name="Teixeira E.C."/>
            <person name="Tezza R.I.D."/>
            <person name="Trindade dos Santos M."/>
            <person name="Truffi D."/>
            <person name="Tsai S.M."/>
            <person name="White F.F."/>
            <person name="Setubal J.C."/>
            <person name="Kitajima J.P."/>
        </authorList>
    </citation>
    <scope>NUCLEOTIDE SEQUENCE [LARGE SCALE GENOMIC DNA]</scope>
    <source>
        <strain>306</strain>
    </source>
</reference>
<protein>
    <recommendedName>
        <fullName>Acylphosphatase</fullName>
        <ecNumber>3.6.1.7</ecNumber>
    </recommendedName>
    <alternativeName>
        <fullName>Acylphosphate phosphohydrolase</fullName>
    </alternativeName>
</protein>
<proteinExistence type="inferred from homology"/>
<sequence>MQAARFVVSGVVQGVYYRACTRQRAVALGLVGHARNQADGSVDVVAAGSAAALDALEAWLCRARRPPRSRRSRARPARFRRLKTL</sequence>
<keyword id="KW-0378">Hydrolase</keyword>
<name>ACYP_XANAC</name>
<organism>
    <name type="scientific">Xanthomonas axonopodis pv. citri (strain 306)</name>
    <dbReference type="NCBI Taxonomy" id="190486"/>
    <lineage>
        <taxon>Bacteria</taxon>
        <taxon>Pseudomonadati</taxon>
        <taxon>Pseudomonadota</taxon>
        <taxon>Gammaproteobacteria</taxon>
        <taxon>Lysobacterales</taxon>
        <taxon>Lysobacteraceae</taxon>
        <taxon>Xanthomonas</taxon>
    </lineage>
</organism>
<comment type="catalytic activity">
    <reaction>
        <text>an acyl phosphate + H2O = a carboxylate + phosphate + H(+)</text>
        <dbReference type="Rhea" id="RHEA:14965"/>
        <dbReference type="ChEBI" id="CHEBI:15377"/>
        <dbReference type="ChEBI" id="CHEBI:15378"/>
        <dbReference type="ChEBI" id="CHEBI:29067"/>
        <dbReference type="ChEBI" id="CHEBI:43474"/>
        <dbReference type="ChEBI" id="CHEBI:59918"/>
        <dbReference type="EC" id="3.6.1.7"/>
    </reaction>
</comment>
<comment type="similarity">
    <text evidence="3">Belongs to the acylphosphatase family.</text>
</comment>
<evidence type="ECO:0000255" key="1">
    <source>
        <dbReference type="PROSITE-ProRule" id="PRU00520"/>
    </source>
</evidence>
<evidence type="ECO:0000256" key="2">
    <source>
        <dbReference type="SAM" id="MobiDB-lite"/>
    </source>
</evidence>
<evidence type="ECO:0000305" key="3"/>
<accession>Q8PNV0</accession>